<gene>
    <name evidence="1" type="primary">pyrC</name>
    <name type="ordered locus">lp_2702</name>
</gene>
<name>PYRC_LACPL</name>
<feature type="chain" id="PRO_0000147237" description="Dihydroorotase">
    <location>
        <begin position="1"/>
        <end position="430"/>
    </location>
</feature>
<feature type="active site" evidence="1">
    <location>
        <position position="306"/>
    </location>
</feature>
<feature type="binding site" evidence="1">
    <location>
        <position position="61"/>
    </location>
    <ligand>
        <name>Zn(2+)</name>
        <dbReference type="ChEBI" id="CHEBI:29105"/>
        <label>1</label>
    </ligand>
</feature>
<feature type="binding site" evidence="1">
    <location>
        <begin position="63"/>
        <end position="65"/>
    </location>
    <ligand>
        <name>substrate</name>
    </ligand>
</feature>
<feature type="binding site" evidence="1">
    <location>
        <position position="63"/>
    </location>
    <ligand>
        <name>Zn(2+)</name>
        <dbReference type="ChEBI" id="CHEBI:29105"/>
        <label>1</label>
    </ligand>
</feature>
<feature type="binding site" evidence="1">
    <location>
        <position position="95"/>
    </location>
    <ligand>
        <name>substrate</name>
    </ligand>
</feature>
<feature type="binding site" evidence="1">
    <location>
        <position position="153"/>
    </location>
    <ligand>
        <name>Zn(2+)</name>
        <dbReference type="ChEBI" id="CHEBI:29105"/>
        <label>1</label>
    </ligand>
</feature>
<feature type="binding site" evidence="1">
    <location>
        <position position="153"/>
    </location>
    <ligand>
        <name>Zn(2+)</name>
        <dbReference type="ChEBI" id="CHEBI:29105"/>
        <label>2</label>
    </ligand>
</feature>
<feature type="binding site" evidence="1">
    <location>
        <position position="180"/>
    </location>
    <ligand>
        <name>Zn(2+)</name>
        <dbReference type="ChEBI" id="CHEBI:29105"/>
        <label>2</label>
    </ligand>
</feature>
<feature type="binding site" evidence="1">
    <location>
        <position position="233"/>
    </location>
    <ligand>
        <name>Zn(2+)</name>
        <dbReference type="ChEBI" id="CHEBI:29105"/>
        <label>2</label>
    </ligand>
</feature>
<feature type="binding site" evidence="1">
    <location>
        <position position="279"/>
    </location>
    <ligand>
        <name>substrate</name>
    </ligand>
</feature>
<feature type="binding site" evidence="1">
    <location>
        <position position="306"/>
    </location>
    <ligand>
        <name>Zn(2+)</name>
        <dbReference type="ChEBI" id="CHEBI:29105"/>
        <label>1</label>
    </ligand>
</feature>
<feature type="binding site" evidence="1">
    <location>
        <position position="310"/>
    </location>
    <ligand>
        <name>substrate</name>
    </ligand>
</feature>
<feature type="binding site" evidence="1">
    <location>
        <begin position="324"/>
        <end position="325"/>
    </location>
    <ligand>
        <name>substrate</name>
    </ligand>
</feature>
<feature type="sequence conflict" description="In Ref. 1; CAA91003." evidence="2" ref="1">
    <original>Q</original>
    <variation>H</variation>
    <location>
        <position position="50"/>
    </location>
</feature>
<feature type="sequence conflict" description="In Ref. 1; CAA91003." evidence="2" ref="1">
    <original>A</original>
    <variation>T</variation>
    <location>
        <position position="360"/>
    </location>
</feature>
<reference key="1">
    <citation type="journal article" date="1996" name="Gene">
        <title>Structure and organisation of the pyrimidine biosynthesis pathway genes in Lactobacillus plantarum: a PCR strategy for sequencing without cloning.</title>
        <authorList>
            <person name="Elagoez A."/>
            <person name="Abdi A."/>
            <person name="Hubert J.-C."/>
            <person name="Kammerer B."/>
        </authorList>
    </citation>
    <scope>NUCLEOTIDE SEQUENCE [GENOMIC DNA]</scope>
    <source>
        <strain>ATCC 8014 / CCM 1904 / DSM 20205 / NCDO 82 / NCIB 6376</strain>
    </source>
</reference>
<reference key="2">
    <citation type="journal article" date="2003" name="Proc. Natl. Acad. Sci. U.S.A.">
        <title>Complete genome sequence of Lactobacillus plantarum WCFS1.</title>
        <authorList>
            <person name="Kleerebezem M."/>
            <person name="Boekhorst J."/>
            <person name="van Kranenburg R."/>
            <person name="Molenaar D."/>
            <person name="Kuipers O.P."/>
            <person name="Leer R."/>
            <person name="Tarchini R."/>
            <person name="Peters S.A."/>
            <person name="Sandbrink H.M."/>
            <person name="Fiers M.W.E.J."/>
            <person name="Stiekema W."/>
            <person name="Klein Lankhorst R.M."/>
            <person name="Bron P.A."/>
            <person name="Hoffer S.M."/>
            <person name="Nierop Groot M.N."/>
            <person name="Kerkhoven R."/>
            <person name="De Vries M."/>
            <person name="Ursing B."/>
            <person name="De Vos W.M."/>
            <person name="Siezen R.J."/>
        </authorList>
    </citation>
    <scope>NUCLEOTIDE SEQUENCE [LARGE SCALE GENOMIC DNA]</scope>
    <source>
        <strain>ATCC BAA-793 / NCIMB 8826 / WCFS1</strain>
    </source>
</reference>
<reference key="3">
    <citation type="journal article" date="2012" name="J. Bacteriol.">
        <title>Complete resequencing and reannotation of the Lactobacillus plantarum WCFS1 genome.</title>
        <authorList>
            <person name="Siezen R.J."/>
            <person name="Francke C."/>
            <person name="Renckens B."/>
            <person name="Boekhorst J."/>
            <person name="Wels M."/>
            <person name="Kleerebezem M."/>
            <person name="van Hijum S.A."/>
        </authorList>
    </citation>
    <scope>NUCLEOTIDE SEQUENCE [LARGE SCALE GENOMIC DNA]</scope>
    <scope>GENOME REANNOTATION</scope>
    <source>
        <strain>ATCC BAA-793 / NCIMB 8826 / WCFS1</strain>
    </source>
</reference>
<protein>
    <recommendedName>
        <fullName evidence="1">Dihydroorotase</fullName>
        <shortName evidence="1">DHOase</shortName>
        <ecNumber evidence="1">3.5.2.3</ecNumber>
    </recommendedName>
</protein>
<comment type="function">
    <text evidence="1">Catalyzes the reversible cyclization of carbamoyl aspartate to dihydroorotate.</text>
</comment>
<comment type="catalytic activity">
    <reaction evidence="1">
        <text>(S)-dihydroorotate + H2O = N-carbamoyl-L-aspartate + H(+)</text>
        <dbReference type="Rhea" id="RHEA:24296"/>
        <dbReference type="ChEBI" id="CHEBI:15377"/>
        <dbReference type="ChEBI" id="CHEBI:15378"/>
        <dbReference type="ChEBI" id="CHEBI:30864"/>
        <dbReference type="ChEBI" id="CHEBI:32814"/>
        <dbReference type="EC" id="3.5.2.3"/>
    </reaction>
</comment>
<comment type="cofactor">
    <cofactor evidence="1">
        <name>Zn(2+)</name>
        <dbReference type="ChEBI" id="CHEBI:29105"/>
    </cofactor>
    <text evidence="1">Binds 2 Zn(2+) ions per subunit.</text>
</comment>
<comment type="pathway">
    <text evidence="1">Pyrimidine metabolism; UMP biosynthesis via de novo pathway; (S)-dihydroorotate from bicarbonate: step 3/3.</text>
</comment>
<comment type="similarity">
    <text evidence="1">Belongs to the metallo-dependent hydrolases superfamily. DHOase family. Class I DHOase subfamily.</text>
</comment>
<keyword id="KW-0378">Hydrolase</keyword>
<keyword id="KW-0479">Metal-binding</keyword>
<keyword id="KW-0665">Pyrimidine biosynthesis</keyword>
<keyword id="KW-1185">Reference proteome</keyword>
<keyword id="KW-0862">Zinc</keyword>
<sequence length="430" mass="45439">MTTLIKNAQVWQAGQLQTTDILIAEGRIKAIGHQLHDQFGPADHVICADQHFVSPGFVDVHVHLRDPGQTAKETIATGTLAAAHGGFTTVGAMPNVDPVPDTPERVATMVARNQQEAHVHVAQYASITTGRTSEQLVDFAGIKAAGAFAVSNDGSGVQTAGTMFAAMQGAAKVGLPLAAHVEDDSLYHHGVMNAGPVADRLGLPGINNVSEAAQVARDVMLAEASGVHYHVCHVSTAESLRVIRNAKAAGINVTCEVSPHHLLLCDEDITMDNPMLKMNPPLRSAKDRAALVAGLLDGTIDMIATDHAPHTDAEKQGSMKTAAFGITGIETAFATLYTALVKTRLLTLGRLIELMSTRPAELFGLNTAGRLVVGAPADLTIIDLDHQYEIEAATMLSKGHNSPFIGWPVYGNVLMTLVDGKLAYGKETQA</sequence>
<proteinExistence type="inferred from homology"/>
<accession>P77884</accession>
<accession>F9URI4</accession>
<dbReference type="EC" id="3.5.2.3" evidence="1"/>
<dbReference type="EMBL" id="Z54240">
    <property type="protein sequence ID" value="CAA91003.1"/>
    <property type="molecule type" value="Genomic_DNA"/>
</dbReference>
<dbReference type="EMBL" id="AL935263">
    <property type="protein sequence ID" value="CCC79823.1"/>
    <property type="molecule type" value="Genomic_DNA"/>
</dbReference>
<dbReference type="RefSeq" id="WP_003644720.1">
    <property type="nucleotide sequence ID" value="NC_004567.2"/>
</dbReference>
<dbReference type="RefSeq" id="YP_004890337.1">
    <property type="nucleotide sequence ID" value="NC_004567.2"/>
</dbReference>
<dbReference type="SMR" id="P77884"/>
<dbReference type="STRING" id="220668.lp_2702"/>
<dbReference type="MEROPS" id="M38.972"/>
<dbReference type="EnsemblBacteria" id="CCC79823">
    <property type="protein sequence ID" value="CCC79823"/>
    <property type="gene ID" value="lp_2702"/>
</dbReference>
<dbReference type="KEGG" id="lpl:lp_2702"/>
<dbReference type="PATRIC" id="fig|220668.9.peg.2262"/>
<dbReference type="eggNOG" id="COG0044">
    <property type="taxonomic scope" value="Bacteria"/>
</dbReference>
<dbReference type="HOGENOM" id="CLU_015572_1_0_9"/>
<dbReference type="OrthoDB" id="9765462at2"/>
<dbReference type="PhylomeDB" id="P77884"/>
<dbReference type="UniPathway" id="UPA00070">
    <property type="reaction ID" value="UER00117"/>
</dbReference>
<dbReference type="Proteomes" id="UP000000432">
    <property type="component" value="Chromosome"/>
</dbReference>
<dbReference type="GO" id="GO:0005737">
    <property type="term" value="C:cytoplasm"/>
    <property type="evidence" value="ECO:0007669"/>
    <property type="project" value="TreeGrafter"/>
</dbReference>
<dbReference type="GO" id="GO:0004038">
    <property type="term" value="F:allantoinase activity"/>
    <property type="evidence" value="ECO:0007669"/>
    <property type="project" value="TreeGrafter"/>
</dbReference>
<dbReference type="GO" id="GO:0004151">
    <property type="term" value="F:dihydroorotase activity"/>
    <property type="evidence" value="ECO:0007669"/>
    <property type="project" value="UniProtKB-UniRule"/>
</dbReference>
<dbReference type="GO" id="GO:0008270">
    <property type="term" value="F:zinc ion binding"/>
    <property type="evidence" value="ECO:0007669"/>
    <property type="project" value="UniProtKB-UniRule"/>
</dbReference>
<dbReference type="GO" id="GO:0044205">
    <property type="term" value="P:'de novo' UMP biosynthetic process"/>
    <property type="evidence" value="ECO:0007669"/>
    <property type="project" value="UniProtKB-UniRule"/>
</dbReference>
<dbReference type="GO" id="GO:0006145">
    <property type="term" value="P:purine nucleobase catabolic process"/>
    <property type="evidence" value="ECO:0007669"/>
    <property type="project" value="TreeGrafter"/>
</dbReference>
<dbReference type="CDD" id="cd01317">
    <property type="entry name" value="DHOase_IIa"/>
    <property type="match status" value="1"/>
</dbReference>
<dbReference type="Gene3D" id="3.20.20.140">
    <property type="entry name" value="Metal-dependent hydrolases"/>
    <property type="match status" value="1"/>
</dbReference>
<dbReference type="Gene3D" id="2.30.40.10">
    <property type="entry name" value="Urease, subunit C, domain 1"/>
    <property type="match status" value="1"/>
</dbReference>
<dbReference type="HAMAP" id="MF_00220_B">
    <property type="entry name" value="PyrC_classI_B"/>
    <property type="match status" value="1"/>
</dbReference>
<dbReference type="InterPro" id="IPR006680">
    <property type="entry name" value="Amidohydro-rel"/>
</dbReference>
<dbReference type="InterPro" id="IPR004722">
    <property type="entry name" value="DHOase"/>
</dbReference>
<dbReference type="InterPro" id="IPR050138">
    <property type="entry name" value="DHOase/Allantoinase_Hydrolase"/>
</dbReference>
<dbReference type="InterPro" id="IPR002195">
    <property type="entry name" value="Dihydroorotase_CS"/>
</dbReference>
<dbReference type="InterPro" id="IPR011059">
    <property type="entry name" value="Metal-dep_hydrolase_composite"/>
</dbReference>
<dbReference type="InterPro" id="IPR032466">
    <property type="entry name" value="Metal_Hydrolase"/>
</dbReference>
<dbReference type="NCBIfam" id="NF006837">
    <property type="entry name" value="PRK09357.1-2"/>
    <property type="match status" value="1"/>
</dbReference>
<dbReference type="NCBIfam" id="TIGR00857">
    <property type="entry name" value="pyrC_multi"/>
    <property type="match status" value="1"/>
</dbReference>
<dbReference type="PANTHER" id="PTHR43668">
    <property type="entry name" value="ALLANTOINASE"/>
    <property type="match status" value="1"/>
</dbReference>
<dbReference type="PANTHER" id="PTHR43668:SF2">
    <property type="entry name" value="ALLANTOINASE"/>
    <property type="match status" value="1"/>
</dbReference>
<dbReference type="Pfam" id="PF01979">
    <property type="entry name" value="Amidohydro_1"/>
    <property type="match status" value="1"/>
</dbReference>
<dbReference type="SUPFAM" id="SSF51338">
    <property type="entry name" value="Composite domain of metallo-dependent hydrolases"/>
    <property type="match status" value="1"/>
</dbReference>
<dbReference type="SUPFAM" id="SSF51556">
    <property type="entry name" value="Metallo-dependent hydrolases"/>
    <property type="match status" value="1"/>
</dbReference>
<dbReference type="PROSITE" id="PS00482">
    <property type="entry name" value="DIHYDROOROTASE_1"/>
    <property type="match status" value="1"/>
</dbReference>
<dbReference type="PROSITE" id="PS00483">
    <property type="entry name" value="DIHYDROOROTASE_2"/>
    <property type="match status" value="1"/>
</dbReference>
<evidence type="ECO:0000255" key="1">
    <source>
        <dbReference type="HAMAP-Rule" id="MF_00220"/>
    </source>
</evidence>
<evidence type="ECO:0000305" key="2"/>
<organism>
    <name type="scientific">Lactiplantibacillus plantarum (strain ATCC BAA-793 / NCIMB 8826 / WCFS1)</name>
    <name type="common">Lactobacillus plantarum</name>
    <dbReference type="NCBI Taxonomy" id="220668"/>
    <lineage>
        <taxon>Bacteria</taxon>
        <taxon>Bacillati</taxon>
        <taxon>Bacillota</taxon>
        <taxon>Bacilli</taxon>
        <taxon>Lactobacillales</taxon>
        <taxon>Lactobacillaceae</taxon>
        <taxon>Lactiplantibacillus</taxon>
    </lineage>
</organism>